<proteinExistence type="inferred from homology"/>
<keyword id="KW-0687">Ribonucleoprotein</keyword>
<keyword id="KW-0689">Ribosomal protein</keyword>
<comment type="similarity">
    <text evidence="1">Belongs to the bacterial ribosomal protein bS16 family.</text>
</comment>
<feature type="chain" id="PRO_1000049260" description="Small ribosomal subunit protein bS16">
    <location>
        <begin position="1"/>
        <end position="82"/>
    </location>
</feature>
<sequence>MVVIRMARGGAKKRSFYRIVVADKRSPRDGRFIEKLGFFNPLAKGGEERLKLDVAKAEAWLAKGAQPSDRVASLIKEAKKAA</sequence>
<evidence type="ECO:0000255" key="1">
    <source>
        <dbReference type="HAMAP-Rule" id="MF_00385"/>
    </source>
</evidence>
<evidence type="ECO:0000305" key="2"/>
<name>RS16_FRATO</name>
<reference key="1">
    <citation type="journal article" date="2006" name="J. Bacteriol.">
        <title>Chromosome rearrangement and diversification of Francisella tularensis revealed by the type B (OSU18) genome sequence.</title>
        <authorList>
            <person name="Petrosino J.F."/>
            <person name="Xiang Q."/>
            <person name="Karpathy S.E."/>
            <person name="Jiang H."/>
            <person name="Yerrapragada S."/>
            <person name="Liu Y."/>
            <person name="Gioia J."/>
            <person name="Hemphill L."/>
            <person name="Gonzalez A."/>
            <person name="Raghavan T.M."/>
            <person name="Uzman A."/>
            <person name="Fox G.E."/>
            <person name="Highlander S."/>
            <person name="Reichard M."/>
            <person name="Morton R.J."/>
            <person name="Clinkenbeard K.D."/>
            <person name="Weinstock G.M."/>
        </authorList>
    </citation>
    <scope>NUCLEOTIDE SEQUENCE [LARGE SCALE GENOMIC DNA]</scope>
    <source>
        <strain>OSU18</strain>
    </source>
</reference>
<organism>
    <name type="scientific">Francisella tularensis subsp. holarctica (strain OSU18)</name>
    <dbReference type="NCBI Taxonomy" id="393011"/>
    <lineage>
        <taxon>Bacteria</taxon>
        <taxon>Pseudomonadati</taxon>
        <taxon>Pseudomonadota</taxon>
        <taxon>Gammaproteobacteria</taxon>
        <taxon>Thiotrichales</taxon>
        <taxon>Francisellaceae</taxon>
        <taxon>Francisella</taxon>
    </lineage>
</organism>
<accession>Q0BKD1</accession>
<protein>
    <recommendedName>
        <fullName evidence="1">Small ribosomal subunit protein bS16</fullName>
    </recommendedName>
    <alternativeName>
        <fullName evidence="2">30S ribosomal protein S16</fullName>
    </alternativeName>
</protein>
<gene>
    <name evidence="1" type="primary">rpsP</name>
    <name type="ordered locus">FTH_1677</name>
</gene>
<dbReference type="EMBL" id="CP000437">
    <property type="protein sequence ID" value="ABI83453.1"/>
    <property type="molecule type" value="Genomic_DNA"/>
</dbReference>
<dbReference type="RefSeq" id="WP_003017217.1">
    <property type="nucleotide sequence ID" value="NC_017463.1"/>
</dbReference>
<dbReference type="SMR" id="Q0BKD1"/>
<dbReference type="KEGG" id="fth:FTH_1677"/>
<dbReference type="GO" id="GO:0005737">
    <property type="term" value="C:cytoplasm"/>
    <property type="evidence" value="ECO:0007669"/>
    <property type="project" value="UniProtKB-ARBA"/>
</dbReference>
<dbReference type="GO" id="GO:0015935">
    <property type="term" value="C:small ribosomal subunit"/>
    <property type="evidence" value="ECO:0007669"/>
    <property type="project" value="TreeGrafter"/>
</dbReference>
<dbReference type="GO" id="GO:0003735">
    <property type="term" value="F:structural constituent of ribosome"/>
    <property type="evidence" value="ECO:0007669"/>
    <property type="project" value="InterPro"/>
</dbReference>
<dbReference type="GO" id="GO:0006412">
    <property type="term" value="P:translation"/>
    <property type="evidence" value="ECO:0007669"/>
    <property type="project" value="UniProtKB-UniRule"/>
</dbReference>
<dbReference type="Gene3D" id="3.30.1320.10">
    <property type="match status" value="1"/>
</dbReference>
<dbReference type="HAMAP" id="MF_00385">
    <property type="entry name" value="Ribosomal_bS16"/>
    <property type="match status" value="1"/>
</dbReference>
<dbReference type="InterPro" id="IPR000307">
    <property type="entry name" value="Ribosomal_bS16"/>
</dbReference>
<dbReference type="InterPro" id="IPR023803">
    <property type="entry name" value="Ribosomal_bS16_dom_sf"/>
</dbReference>
<dbReference type="NCBIfam" id="TIGR00002">
    <property type="entry name" value="S16"/>
    <property type="match status" value="1"/>
</dbReference>
<dbReference type="PANTHER" id="PTHR12919">
    <property type="entry name" value="30S RIBOSOMAL PROTEIN S16"/>
    <property type="match status" value="1"/>
</dbReference>
<dbReference type="PANTHER" id="PTHR12919:SF20">
    <property type="entry name" value="SMALL RIBOSOMAL SUBUNIT PROTEIN BS16M"/>
    <property type="match status" value="1"/>
</dbReference>
<dbReference type="Pfam" id="PF00886">
    <property type="entry name" value="Ribosomal_S16"/>
    <property type="match status" value="1"/>
</dbReference>
<dbReference type="SUPFAM" id="SSF54565">
    <property type="entry name" value="Ribosomal protein S16"/>
    <property type="match status" value="1"/>
</dbReference>